<protein>
    <recommendedName>
        <fullName>Lipoteichoic acid synthase</fullName>
    </recommendedName>
    <component>
        <recommendedName>
            <fullName>Glycerol phosphate lipoteichoic acid synthase</fullName>
            <shortName>LTA synthase</shortName>
            <ecNumber>2.7.8.-</ecNumber>
        </recommendedName>
        <alternativeName>
            <fullName>Polyglycerol phosphate synthase</fullName>
        </alternativeName>
    </component>
    <component>
        <recommendedName>
            <fullName>Processed glycerol phosphate lipoteichoic acid synthase</fullName>
        </recommendedName>
    </component>
</protein>
<comment type="function">
    <text evidence="1">Catalyzes the polymerization of lipoteichoic acid (LTA) polyglycerol phosphate, a reaction that presumably uses phosphatidylglycerol (PG) as substrate. Is required for staphylococcal growth and cell division process (By similarity).</text>
</comment>
<comment type="pathway">
    <text>Cell wall biogenesis; lipoteichoic acid biosynthesis.</text>
</comment>
<comment type="subcellular location">
    <subcellularLocation>
        <location evidence="3">Cell membrane</location>
        <topology evidence="3">Multi-pass membrane protein</topology>
    </subcellularLocation>
</comment>
<comment type="subcellular location">
    <molecule>Processed glycerol phosphate lipoteichoic acid synthase</molecule>
    <subcellularLocation>
        <location evidence="1">Secreted</location>
    </subcellularLocation>
</comment>
<comment type="PTM">
    <text evidence="1">Proteolytically cleaved.</text>
</comment>
<comment type="similarity">
    <text evidence="3">Belongs to the LTA synthase family.</text>
</comment>
<keyword id="KW-1003">Cell membrane</keyword>
<keyword id="KW-0961">Cell wall biogenesis/degradation</keyword>
<keyword id="KW-0464">Manganese</keyword>
<keyword id="KW-0472">Membrane</keyword>
<keyword id="KW-0479">Metal-binding</keyword>
<keyword id="KW-0964">Secreted</keyword>
<keyword id="KW-0808">Transferase</keyword>
<keyword id="KW-0812">Transmembrane</keyword>
<keyword id="KW-1133">Transmembrane helix</keyword>
<organism>
    <name type="scientific">Staphylococcus epidermidis (strain ATCC 12228 / FDA PCI 1200)</name>
    <dbReference type="NCBI Taxonomy" id="176280"/>
    <lineage>
        <taxon>Bacteria</taxon>
        <taxon>Bacillati</taxon>
        <taxon>Bacillota</taxon>
        <taxon>Bacilli</taxon>
        <taxon>Bacillales</taxon>
        <taxon>Staphylococcaceae</taxon>
        <taxon>Staphylococcus</taxon>
    </lineage>
</organism>
<name>LTAS_STAES</name>
<reference key="1">
    <citation type="journal article" date="2003" name="Mol. Microbiol.">
        <title>Genome-based analysis of virulence genes in a non-biofilm-forming Staphylococcus epidermidis strain (ATCC 12228).</title>
        <authorList>
            <person name="Zhang Y.-Q."/>
            <person name="Ren S.-X."/>
            <person name="Li H.-L."/>
            <person name="Wang Y.-X."/>
            <person name="Fu G."/>
            <person name="Yang J."/>
            <person name="Qin Z.-Q."/>
            <person name="Miao Y.-G."/>
            <person name="Wang W.-Y."/>
            <person name="Chen R.-S."/>
            <person name="Shen Y."/>
            <person name="Chen Z."/>
            <person name="Yuan Z.-H."/>
            <person name="Zhao G.-P."/>
            <person name="Qu D."/>
            <person name="Danchin A."/>
            <person name="Wen Y.-M."/>
        </authorList>
    </citation>
    <scope>NUCLEOTIDE SEQUENCE [LARGE SCALE GENOMIC DNA]</scope>
    <source>
        <strain>ATCC 12228 / FDA PCI 1200</strain>
    </source>
</reference>
<dbReference type="EC" id="2.7.8.-"/>
<dbReference type="EMBL" id="AE015929">
    <property type="protein sequence ID" value="AAO04091.1"/>
    <property type="molecule type" value="Genomic_DNA"/>
</dbReference>
<dbReference type="RefSeq" id="NP_764049.1">
    <property type="nucleotide sequence ID" value="NC_004461.1"/>
</dbReference>
<dbReference type="RefSeq" id="WP_002484992.1">
    <property type="nucleotide sequence ID" value="NC_004461.1"/>
</dbReference>
<dbReference type="SMR" id="Q8CQ10"/>
<dbReference type="KEGG" id="sep:SE_0494"/>
<dbReference type="PATRIC" id="fig|176280.10.peg.466"/>
<dbReference type="eggNOG" id="COG1368">
    <property type="taxonomic scope" value="Bacteria"/>
</dbReference>
<dbReference type="HOGENOM" id="CLU_021310_0_0_9"/>
<dbReference type="OrthoDB" id="5901192at2"/>
<dbReference type="UniPathway" id="UPA00556"/>
<dbReference type="Proteomes" id="UP000001411">
    <property type="component" value="Chromosome"/>
</dbReference>
<dbReference type="GO" id="GO:0005576">
    <property type="term" value="C:extracellular region"/>
    <property type="evidence" value="ECO:0007669"/>
    <property type="project" value="UniProtKB-SubCell"/>
</dbReference>
<dbReference type="GO" id="GO:0005886">
    <property type="term" value="C:plasma membrane"/>
    <property type="evidence" value="ECO:0007669"/>
    <property type="project" value="UniProtKB-SubCell"/>
</dbReference>
<dbReference type="GO" id="GO:0046872">
    <property type="term" value="F:metal ion binding"/>
    <property type="evidence" value="ECO:0007669"/>
    <property type="project" value="UniProtKB-KW"/>
</dbReference>
<dbReference type="GO" id="GO:0016740">
    <property type="term" value="F:transferase activity"/>
    <property type="evidence" value="ECO:0007669"/>
    <property type="project" value="UniProtKB-KW"/>
</dbReference>
<dbReference type="GO" id="GO:0071555">
    <property type="term" value="P:cell wall organization"/>
    <property type="evidence" value="ECO:0007669"/>
    <property type="project" value="UniProtKB-KW"/>
</dbReference>
<dbReference type="GO" id="GO:0070395">
    <property type="term" value="P:lipoteichoic acid biosynthetic process"/>
    <property type="evidence" value="ECO:0007669"/>
    <property type="project" value="UniProtKB-UniPathway"/>
</dbReference>
<dbReference type="CDD" id="cd16015">
    <property type="entry name" value="LTA_synthase"/>
    <property type="match status" value="1"/>
</dbReference>
<dbReference type="Gene3D" id="3.30.1120.170">
    <property type="match status" value="1"/>
</dbReference>
<dbReference type="Gene3D" id="3.40.720.10">
    <property type="entry name" value="Alkaline Phosphatase, subunit A"/>
    <property type="match status" value="1"/>
</dbReference>
<dbReference type="InterPro" id="IPR017850">
    <property type="entry name" value="Alkaline_phosphatase_core_sf"/>
</dbReference>
<dbReference type="InterPro" id="IPR012160">
    <property type="entry name" value="LtaS-like"/>
</dbReference>
<dbReference type="InterPro" id="IPR050448">
    <property type="entry name" value="OpgB/LTA_synthase_biosynth"/>
</dbReference>
<dbReference type="InterPro" id="IPR000917">
    <property type="entry name" value="Sulfatase_N"/>
</dbReference>
<dbReference type="PANTHER" id="PTHR47371">
    <property type="entry name" value="LIPOTEICHOIC ACID SYNTHASE"/>
    <property type="match status" value="1"/>
</dbReference>
<dbReference type="PANTHER" id="PTHR47371:SF3">
    <property type="entry name" value="PHOSPHOGLYCEROL TRANSFERASE I"/>
    <property type="match status" value="1"/>
</dbReference>
<dbReference type="Pfam" id="PF00884">
    <property type="entry name" value="Sulfatase"/>
    <property type="match status" value="1"/>
</dbReference>
<dbReference type="PIRSF" id="PIRSF005091">
    <property type="entry name" value="Mmb_sulf_HI1246"/>
    <property type="match status" value="1"/>
</dbReference>
<dbReference type="SUPFAM" id="SSF53649">
    <property type="entry name" value="Alkaline phosphatase-like"/>
    <property type="match status" value="1"/>
</dbReference>
<evidence type="ECO:0000250" key="1"/>
<evidence type="ECO:0000255" key="2"/>
<evidence type="ECO:0000305" key="3"/>
<accession>Q8CQ10</accession>
<proteinExistence type="inferred from homology"/>
<feature type="chain" id="PRO_0000305368" description="Glycerol phosphate lipoteichoic acid synthase">
    <location>
        <begin position="1"/>
        <end position="217"/>
    </location>
</feature>
<feature type="chain" id="PRO_0000305369" description="Processed glycerol phosphate lipoteichoic acid synthase">
    <location>
        <begin position="218"/>
        <end position="646"/>
    </location>
</feature>
<feature type="topological domain" description="Cytoplasmic" evidence="2">
    <location>
        <begin position="1"/>
        <end position="7"/>
    </location>
</feature>
<feature type="transmembrane region" description="Helical" evidence="2">
    <location>
        <begin position="8"/>
        <end position="28"/>
    </location>
</feature>
<feature type="topological domain" description="Extracellular" evidence="2">
    <location>
        <begin position="29"/>
        <end position="43"/>
    </location>
</feature>
<feature type="transmembrane region" description="Helical" evidence="2">
    <location>
        <begin position="44"/>
        <end position="64"/>
    </location>
</feature>
<feature type="topological domain" description="Cytoplasmic" evidence="2">
    <location>
        <begin position="65"/>
        <end position="68"/>
    </location>
</feature>
<feature type="transmembrane region" description="Helical" evidence="2">
    <location>
        <begin position="69"/>
        <end position="89"/>
    </location>
</feature>
<feature type="topological domain" description="Extracellular" evidence="2">
    <location>
        <begin position="90"/>
        <end position="119"/>
    </location>
</feature>
<feature type="transmembrane region" description="Helical" evidence="2">
    <location>
        <begin position="120"/>
        <end position="140"/>
    </location>
</feature>
<feature type="topological domain" description="Cytoplasmic" evidence="2">
    <location>
        <begin position="141"/>
        <end position="153"/>
    </location>
</feature>
<feature type="transmembrane region" description="Helical" evidence="2">
    <location>
        <begin position="154"/>
        <end position="174"/>
    </location>
</feature>
<feature type="topological domain" description="Extracellular" evidence="2">
    <location>
        <begin position="175"/>
        <end position="646"/>
    </location>
</feature>
<feature type="active site" evidence="1">
    <location>
        <position position="300"/>
    </location>
</feature>
<feature type="binding site" evidence="1">
    <location>
        <position position="255"/>
    </location>
    <ligand>
        <name>Mn(2+)</name>
        <dbReference type="ChEBI" id="CHEBI:29035"/>
    </ligand>
</feature>
<feature type="binding site" evidence="1">
    <location>
        <position position="300"/>
    </location>
    <ligand>
        <name>Mn(2+)</name>
        <dbReference type="ChEBI" id="CHEBI:29035"/>
    </ligand>
</feature>
<feature type="binding site" evidence="1">
    <location>
        <position position="416"/>
    </location>
    <ligand>
        <name>substrate</name>
    </ligand>
</feature>
<feature type="binding site" evidence="1">
    <location>
        <position position="475"/>
    </location>
    <ligand>
        <name>Mn(2+)</name>
        <dbReference type="ChEBI" id="CHEBI:29035"/>
    </ligand>
</feature>
<feature type="binding site" evidence="1">
    <location>
        <position position="476"/>
    </location>
    <ligand>
        <name>Mn(2+)</name>
        <dbReference type="ChEBI" id="CHEBI:29035"/>
    </ligand>
</feature>
<feature type="site" description="Cleavage" evidence="1">
    <location>
        <begin position="217"/>
        <end position="218"/>
    </location>
</feature>
<sequence length="646" mass="74437">MSLPKKKIGIFAFFLLTVFTITLKTYFSYYVDFSLGVKGLVQNLILIMNPYSLIALVLSVFLFFKGKKAFWFIFIGGFLLTFLLYANVVYFRFFSDFLTFSTLNQAGNVESMGGAVSASFKWYDFVYFIDTIIYLAILIFKRKWLDNRAFSKKFVPVVMATSVALFFLNLAFAETDRPELLTRTFDHKYLVKYLGPYNFTVYDGVKTIENNQQKALASEDDLTKVLNYTKQKRTEPNPEYYGAAKKKNIIKIHLESFQTFLINKKVNGKEVTPFLNKLSSGNQDFTYFPNFFHQTGQGKTSDSEFTMDNSLYGLPQGSAYSLKGDNTYQSLPAILDQKQGYTSNVMHGDYKTFWNRDQVYKHFGIDNFYDATYYDMSDDNIVNLGLKDKPFFKASADYQSKMKKPFYSHLITLTNHYPFTLDEEDASIDKPNTGDSTVDGYIQTAHYLDQALEEYITDLKKKGLYDNSVIMIYGDHYGISENHNNAMEKLLGEKITPAKFTDLNRTGFWLKVPGKSGGVNKEYAGQMDVMPTLLHLVGIDSKNYLMFGSDMFSKQHNNVVPFRNGDFITEDYKYVNGKIYSNKDNELLTEKPKDFDKNKKQVEKDLEMSDSVLNGDLFRFYKNPDFKKVNPGKYEYKSGPKGNEKK</sequence>
<gene>
    <name type="primary">ltaS</name>
    <name type="ordered locus">SE_0494</name>
</gene>